<accession>Q9QXS8</accession>
<accession>Q8R1G0</accession>
<accession>Q9D8Z0</accession>
<comment type="function">
    <text evidence="4">May play a role in regulation of gastrulation.</text>
</comment>
<comment type="subcellular location">
    <subcellularLocation>
        <location evidence="2">Membrane</location>
        <topology evidence="2">Multi-pass membrane protein</topology>
    </subcellularLocation>
</comment>
<comment type="similarity">
    <text evidence="4">Belongs to the camello family.</text>
</comment>
<sequence>MAPYQIRQYQERDYKLVVGLFSRGMMEHIPAAFRYTLLLPQTLLFLFVMPLTIVLVFGSWLLAVICIFFLLLLLRLLAGQPFKDYVAQCLQTDMADITRSYLNAHGSFWVAESGGLVVGTVGGLPVKDPPLGRKQMQLFHLSVSSQHRGQGIAKALVRTVFQFARDQGYSDVVLETSVIQQSAITLYEAMGFQRTGKYSEISIIKWLITFSIIHFTYSFPSTQKHEL</sequence>
<reference evidence="8" key="1">
    <citation type="journal article" date="2005" name="Science">
        <title>The transcriptional landscape of the mammalian genome.</title>
        <authorList>
            <person name="Carninci P."/>
            <person name="Kasukawa T."/>
            <person name="Katayama S."/>
            <person name="Gough J."/>
            <person name="Frith M.C."/>
            <person name="Maeda N."/>
            <person name="Oyama R."/>
            <person name="Ravasi T."/>
            <person name="Lenhard B."/>
            <person name="Wells C."/>
            <person name="Kodzius R."/>
            <person name="Shimokawa K."/>
            <person name="Bajic V.B."/>
            <person name="Brenner S.E."/>
            <person name="Batalov S."/>
            <person name="Forrest A.R."/>
            <person name="Zavolan M."/>
            <person name="Davis M.J."/>
            <person name="Wilming L.G."/>
            <person name="Aidinis V."/>
            <person name="Allen J.E."/>
            <person name="Ambesi-Impiombato A."/>
            <person name="Apweiler R."/>
            <person name="Aturaliya R.N."/>
            <person name="Bailey T.L."/>
            <person name="Bansal M."/>
            <person name="Baxter L."/>
            <person name="Beisel K.W."/>
            <person name="Bersano T."/>
            <person name="Bono H."/>
            <person name="Chalk A.M."/>
            <person name="Chiu K.P."/>
            <person name="Choudhary V."/>
            <person name="Christoffels A."/>
            <person name="Clutterbuck D.R."/>
            <person name="Crowe M.L."/>
            <person name="Dalla E."/>
            <person name="Dalrymple B.P."/>
            <person name="de Bono B."/>
            <person name="Della Gatta G."/>
            <person name="di Bernardo D."/>
            <person name="Down T."/>
            <person name="Engstrom P."/>
            <person name="Fagiolini M."/>
            <person name="Faulkner G."/>
            <person name="Fletcher C.F."/>
            <person name="Fukushima T."/>
            <person name="Furuno M."/>
            <person name="Futaki S."/>
            <person name="Gariboldi M."/>
            <person name="Georgii-Hemming P."/>
            <person name="Gingeras T.R."/>
            <person name="Gojobori T."/>
            <person name="Green R.E."/>
            <person name="Gustincich S."/>
            <person name="Harbers M."/>
            <person name="Hayashi Y."/>
            <person name="Hensch T.K."/>
            <person name="Hirokawa N."/>
            <person name="Hill D."/>
            <person name="Huminiecki L."/>
            <person name="Iacono M."/>
            <person name="Ikeo K."/>
            <person name="Iwama A."/>
            <person name="Ishikawa T."/>
            <person name="Jakt M."/>
            <person name="Kanapin A."/>
            <person name="Katoh M."/>
            <person name="Kawasawa Y."/>
            <person name="Kelso J."/>
            <person name="Kitamura H."/>
            <person name="Kitano H."/>
            <person name="Kollias G."/>
            <person name="Krishnan S.P."/>
            <person name="Kruger A."/>
            <person name="Kummerfeld S.K."/>
            <person name="Kurochkin I.V."/>
            <person name="Lareau L.F."/>
            <person name="Lazarevic D."/>
            <person name="Lipovich L."/>
            <person name="Liu J."/>
            <person name="Liuni S."/>
            <person name="McWilliam S."/>
            <person name="Madan Babu M."/>
            <person name="Madera M."/>
            <person name="Marchionni L."/>
            <person name="Matsuda H."/>
            <person name="Matsuzawa S."/>
            <person name="Miki H."/>
            <person name="Mignone F."/>
            <person name="Miyake S."/>
            <person name="Morris K."/>
            <person name="Mottagui-Tabar S."/>
            <person name="Mulder N."/>
            <person name="Nakano N."/>
            <person name="Nakauchi H."/>
            <person name="Ng P."/>
            <person name="Nilsson R."/>
            <person name="Nishiguchi S."/>
            <person name="Nishikawa S."/>
            <person name="Nori F."/>
            <person name="Ohara O."/>
            <person name="Okazaki Y."/>
            <person name="Orlando V."/>
            <person name="Pang K.C."/>
            <person name="Pavan W.J."/>
            <person name="Pavesi G."/>
            <person name="Pesole G."/>
            <person name="Petrovsky N."/>
            <person name="Piazza S."/>
            <person name="Reed J."/>
            <person name="Reid J.F."/>
            <person name="Ring B.Z."/>
            <person name="Ringwald M."/>
            <person name="Rost B."/>
            <person name="Ruan Y."/>
            <person name="Salzberg S.L."/>
            <person name="Sandelin A."/>
            <person name="Schneider C."/>
            <person name="Schoenbach C."/>
            <person name="Sekiguchi K."/>
            <person name="Semple C.A."/>
            <person name="Seno S."/>
            <person name="Sessa L."/>
            <person name="Sheng Y."/>
            <person name="Shibata Y."/>
            <person name="Shimada H."/>
            <person name="Shimada K."/>
            <person name="Silva D."/>
            <person name="Sinclair B."/>
            <person name="Sperling S."/>
            <person name="Stupka E."/>
            <person name="Sugiura K."/>
            <person name="Sultana R."/>
            <person name="Takenaka Y."/>
            <person name="Taki K."/>
            <person name="Tammoja K."/>
            <person name="Tan S.L."/>
            <person name="Tang S."/>
            <person name="Taylor M.S."/>
            <person name="Tegner J."/>
            <person name="Teichmann S.A."/>
            <person name="Ueda H.R."/>
            <person name="van Nimwegen E."/>
            <person name="Verardo R."/>
            <person name="Wei C.L."/>
            <person name="Yagi K."/>
            <person name="Yamanishi H."/>
            <person name="Zabarovsky E."/>
            <person name="Zhu S."/>
            <person name="Zimmer A."/>
            <person name="Hide W."/>
            <person name="Bult C."/>
            <person name="Grimmond S.M."/>
            <person name="Teasdale R.D."/>
            <person name="Liu E.T."/>
            <person name="Brusic V."/>
            <person name="Quackenbush J."/>
            <person name="Wahlestedt C."/>
            <person name="Mattick J.S."/>
            <person name="Hume D.A."/>
            <person name="Kai C."/>
            <person name="Sasaki D."/>
            <person name="Tomaru Y."/>
            <person name="Fukuda S."/>
            <person name="Kanamori-Katayama M."/>
            <person name="Suzuki M."/>
            <person name="Aoki J."/>
            <person name="Arakawa T."/>
            <person name="Iida J."/>
            <person name="Imamura K."/>
            <person name="Itoh M."/>
            <person name="Kato T."/>
            <person name="Kawaji H."/>
            <person name="Kawagashira N."/>
            <person name="Kawashima T."/>
            <person name="Kojima M."/>
            <person name="Kondo S."/>
            <person name="Konno H."/>
            <person name="Nakano K."/>
            <person name="Ninomiya N."/>
            <person name="Nishio T."/>
            <person name="Okada M."/>
            <person name="Plessy C."/>
            <person name="Shibata K."/>
            <person name="Shiraki T."/>
            <person name="Suzuki S."/>
            <person name="Tagami M."/>
            <person name="Waki K."/>
            <person name="Watahiki A."/>
            <person name="Okamura-Oho Y."/>
            <person name="Suzuki H."/>
            <person name="Kawai J."/>
            <person name="Hayashizaki Y."/>
        </authorList>
    </citation>
    <scope>NUCLEOTIDE SEQUENCE [LARGE SCALE MRNA]</scope>
    <source>
        <strain evidence="8">C57BL/6J</strain>
        <tissue evidence="8">Pancreas</tissue>
    </source>
</reference>
<reference evidence="7" key="2">
    <citation type="journal article" date="2004" name="Genome Res.">
        <title>The status, quality, and expansion of the NIH full-length cDNA project: the Mammalian Gene Collection (MGC).</title>
        <authorList>
            <consortium name="The MGC Project Team"/>
        </authorList>
    </citation>
    <scope>NUCLEOTIDE SEQUENCE [LARGE SCALE MRNA]</scope>
    <source>
        <strain evidence="7">FVB/N</strain>
        <tissue evidence="7">Kidney</tissue>
    </source>
</reference>
<reference evidence="5 6" key="3">
    <citation type="journal article" date="2001" name="Dev. Biol.">
        <title>Overexpression of camello, a member of a novel protein family, reduces blastomere adhesion and inhibits gastrulation in Xenopus laevis.</title>
        <authorList>
            <person name="Popsueva A.E."/>
            <person name="Luchinskaya N.N."/>
            <person name="Ludwig A.V."/>
            <person name="Zinovjeva O.Y."/>
            <person name="Poteryaev D.A."/>
            <person name="Feigelman M.M."/>
            <person name="Ponomarev M.B."/>
            <person name="Berekelya L."/>
            <person name="Belyavsky A.V."/>
        </authorList>
    </citation>
    <scope>NUCLEOTIDE SEQUENCE [MRNA] OF 97-227</scope>
    <source>
        <tissue evidence="6">Kidney</tissue>
    </source>
</reference>
<protein>
    <recommendedName>
        <fullName evidence="5">Probable N-acetyltransferase family 8 member 5</fullName>
        <ecNumber>2.3.1.-</ecNumber>
    </recommendedName>
    <alternativeName>
        <fullName evidence="1">Camello-like protein 5</fullName>
    </alternativeName>
    <alternativeName>
        <fullName evidence="5">Probable N-acetyltransferase CML5</fullName>
    </alternativeName>
</protein>
<name>CMLO5_MOUSE</name>
<feature type="chain" id="PRO_0000284694" description="Probable N-acetyltransferase family 8 member 5">
    <location>
        <begin position="1"/>
        <end position="227"/>
    </location>
</feature>
<feature type="transmembrane region" description="Helical" evidence="2">
    <location>
        <begin position="29"/>
        <end position="49"/>
    </location>
</feature>
<feature type="transmembrane region" description="Helical" evidence="2">
    <location>
        <begin position="53"/>
        <end position="73"/>
    </location>
</feature>
<feature type="transmembrane region" description="Helical" evidence="2">
    <location>
        <begin position="201"/>
        <end position="221"/>
    </location>
</feature>
<feature type="domain" description="N-acetyltransferase" evidence="3">
    <location>
        <begin position="69"/>
        <end position="213"/>
    </location>
</feature>
<feature type="sequence conflict" description="In Ref. 2; AAH24605 and 3; AAF22301." evidence="5" ref="2 3">
    <original>R</original>
    <variation>K</variation>
    <location>
        <position position="99"/>
    </location>
</feature>
<feature type="sequence conflict" description="In Ref. 3; AAF22301." evidence="5" ref="3">
    <original>S</original>
    <variation>F</variation>
    <location>
        <position position="211"/>
    </location>
</feature>
<feature type="sequence conflict" description="In Ref. 3; AAF22301." evidence="5" ref="3">
    <original>ST</original>
    <variation>FI</variation>
    <location>
        <begin position="221"/>
        <end position="222"/>
    </location>
</feature>
<evidence type="ECO:0000250" key="1">
    <source>
        <dbReference type="UniProtKB" id="Q9QXS7"/>
    </source>
</evidence>
<evidence type="ECO:0000255" key="2"/>
<evidence type="ECO:0000255" key="3">
    <source>
        <dbReference type="PROSITE-ProRule" id="PRU00532"/>
    </source>
</evidence>
<evidence type="ECO:0000269" key="4">
    <source>
    </source>
</evidence>
<evidence type="ECO:0000305" key="5"/>
<evidence type="ECO:0000312" key="6">
    <source>
        <dbReference type="EMBL" id="AAF22301.1"/>
    </source>
</evidence>
<evidence type="ECO:0000312" key="7">
    <source>
        <dbReference type="EMBL" id="AAH24605.1"/>
    </source>
</evidence>
<evidence type="ECO:0000312" key="8">
    <source>
        <dbReference type="EMBL" id="BAB25091.1"/>
    </source>
</evidence>
<evidence type="ECO:0000312" key="9">
    <source>
        <dbReference type="MGI" id="MGI:1916299"/>
    </source>
</evidence>
<proteinExistence type="evidence at transcript level"/>
<organism>
    <name type="scientific">Mus musculus</name>
    <name type="common">Mouse</name>
    <dbReference type="NCBI Taxonomy" id="10090"/>
    <lineage>
        <taxon>Eukaryota</taxon>
        <taxon>Metazoa</taxon>
        <taxon>Chordata</taxon>
        <taxon>Craniata</taxon>
        <taxon>Vertebrata</taxon>
        <taxon>Euteleostomi</taxon>
        <taxon>Mammalia</taxon>
        <taxon>Eutheria</taxon>
        <taxon>Euarchontoglires</taxon>
        <taxon>Glires</taxon>
        <taxon>Rodentia</taxon>
        <taxon>Myomorpha</taxon>
        <taxon>Muroidea</taxon>
        <taxon>Muridae</taxon>
        <taxon>Murinae</taxon>
        <taxon>Mus</taxon>
        <taxon>Mus</taxon>
    </lineage>
</organism>
<dbReference type="EC" id="2.3.1.-"/>
<dbReference type="EMBL" id="AK007530">
    <property type="protein sequence ID" value="BAB25091.1"/>
    <property type="molecule type" value="mRNA"/>
</dbReference>
<dbReference type="EMBL" id="BC024605">
    <property type="protein sequence ID" value="AAH24605.1"/>
    <property type="molecule type" value="mRNA"/>
</dbReference>
<dbReference type="EMBL" id="AF187099">
    <property type="protein sequence ID" value="AAF22301.1"/>
    <property type="molecule type" value="mRNA"/>
</dbReference>
<dbReference type="CCDS" id="CCDS20300.1"/>
<dbReference type="RefSeq" id="NP_075982.2">
    <property type="nucleotide sequence ID" value="NM_023493.2"/>
</dbReference>
<dbReference type="FunCoup" id="Q9QXS8">
    <property type="interactions" value="122"/>
</dbReference>
<dbReference type="STRING" id="10090.ENSMUSP00000032074"/>
<dbReference type="iPTMnet" id="Q9QXS8"/>
<dbReference type="PhosphoSitePlus" id="Q9QXS8"/>
<dbReference type="jPOST" id="Q9QXS8"/>
<dbReference type="PaxDb" id="10090-ENSMUSP00000032074"/>
<dbReference type="PeptideAtlas" id="Q9QXS8"/>
<dbReference type="ProteomicsDB" id="283638"/>
<dbReference type="DNASU" id="69049"/>
<dbReference type="Ensembl" id="ENSMUST00000032074.5">
    <property type="protein sequence ID" value="ENSMUSP00000032074.4"/>
    <property type="gene ID" value="ENSMUSG00000079494.3"/>
</dbReference>
<dbReference type="GeneID" id="69049"/>
<dbReference type="KEGG" id="mmu:69049"/>
<dbReference type="UCSC" id="uc009cqg.2">
    <property type="organism name" value="mouse"/>
</dbReference>
<dbReference type="AGR" id="MGI:1916299"/>
<dbReference type="CTD" id="69049"/>
<dbReference type="MGI" id="MGI:1916299">
    <property type="gene designation" value="Nat8f5"/>
</dbReference>
<dbReference type="VEuPathDB" id="HostDB:ENSMUSG00000079494"/>
<dbReference type="eggNOG" id="KOG3139">
    <property type="taxonomic scope" value="Eukaryota"/>
</dbReference>
<dbReference type="GeneTree" id="ENSGT00950000182932"/>
<dbReference type="HOGENOM" id="CLU_013985_10_1_1"/>
<dbReference type="InParanoid" id="Q9QXS8"/>
<dbReference type="OMA" id="DFWILFY"/>
<dbReference type="OrthoDB" id="41532at2759"/>
<dbReference type="PhylomeDB" id="Q9QXS8"/>
<dbReference type="TreeFam" id="TF324687"/>
<dbReference type="BioGRID-ORCS" id="69049">
    <property type="hits" value="2 hits in 76 CRISPR screens"/>
</dbReference>
<dbReference type="ChiTaRS" id="Nat8f5">
    <property type="organism name" value="mouse"/>
</dbReference>
<dbReference type="PRO" id="PR:Q9QXS8"/>
<dbReference type="Proteomes" id="UP000000589">
    <property type="component" value="Chromosome 6"/>
</dbReference>
<dbReference type="RNAct" id="Q9QXS8">
    <property type="molecule type" value="protein"/>
</dbReference>
<dbReference type="Bgee" id="ENSMUSG00000079494">
    <property type="expression patterns" value="Expressed in right kidney and 37 other cell types or tissues"/>
</dbReference>
<dbReference type="GO" id="GO:0005783">
    <property type="term" value="C:endoplasmic reticulum"/>
    <property type="evidence" value="ECO:0000247"/>
    <property type="project" value="MGI"/>
</dbReference>
<dbReference type="GO" id="GO:0005794">
    <property type="term" value="C:Golgi apparatus"/>
    <property type="evidence" value="ECO:0000247"/>
    <property type="project" value="MGI"/>
</dbReference>
<dbReference type="GO" id="GO:0016020">
    <property type="term" value="C:membrane"/>
    <property type="evidence" value="ECO:0000303"/>
    <property type="project" value="UniProtKB"/>
</dbReference>
<dbReference type="GO" id="GO:0008080">
    <property type="term" value="F:N-acetyltransferase activity"/>
    <property type="evidence" value="ECO:0000303"/>
    <property type="project" value="UniProtKB"/>
</dbReference>
<dbReference type="GO" id="GO:0007368">
    <property type="term" value="P:determination of left/right symmetry"/>
    <property type="evidence" value="ECO:0000315"/>
    <property type="project" value="MGI"/>
</dbReference>
<dbReference type="GO" id="GO:0001702">
    <property type="term" value="P:gastrulation with mouth forming second"/>
    <property type="evidence" value="ECO:0000303"/>
    <property type="project" value="UniProtKB"/>
</dbReference>
<dbReference type="GO" id="GO:0007507">
    <property type="term" value="P:heart development"/>
    <property type="evidence" value="ECO:0000315"/>
    <property type="project" value="MGI"/>
</dbReference>
<dbReference type="GO" id="GO:0007162">
    <property type="term" value="P:negative regulation of cell adhesion"/>
    <property type="evidence" value="ECO:0000247"/>
    <property type="project" value="MGI"/>
</dbReference>
<dbReference type="CDD" id="cd04301">
    <property type="entry name" value="NAT_SF"/>
    <property type="match status" value="1"/>
</dbReference>
<dbReference type="Gene3D" id="3.40.630.30">
    <property type="match status" value="1"/>
</dbReference>
<dbReference type="InterPro" id="IPR016181">
    <property type="entry name" value="Acyl_CoA_acyltransferase"/>
</dbReference>
<dbReference type="InterPro" id="IPR000182">
    <property type="entry name" value="GNAT_dom"/>
</dbReference>
<dbReference type="InterPro" id="IPR050769">
    <property type="entry name" value="NAT_camello-type"/>
</dbReference>
<dbReference type="PANTHER" id="PTHR13947">
    <property type="entry name" value="GNAT FAMILY N-ACETYLTRANSFERASE"/>
    <property type="match status" value="1"/>
</dbReference>
<dbReference type="PANTHER" id="PTHR13947:SF56">
    <property type="entry name" value="N-ACETYLTRANSFERASE CML5-RELATED"/>
    <property type="match status" value="1"/>
</dbReference>
<dbReference type="Pfam" id="PF00583">
    <property type="entry name" value="Acetyltransf_1"/>
    <property type="match status" value="1"/>
</dbReference>
<dbReference type="SUPFAM" id="SSF55729">
    <property type="entry name" value="Acyl-CoA N-acyltransferases (Nat)"/>
    <property type="match status" value="1"/>
</dbReference>
<dbReference type="PROSITE" id="PS51186">
    <property type="entry name" value="GNAT"/>
    <property type="match status" value="1"/>
</dbReference>
<keyword id="KW-0012">Acyltransferase</keyword>
<keyword id="KW-0217">Developmental protein</keyword>
<keyword id="KW-0306">Gastrulation</keyword>
<keyword id="KW-0472">Membrane</keyword>
<keyword id="KW-1185">Reference proteome</keyword>
<keyword id="KW-0808">Transferase</keyword>
<keyword id="KW-0812">Transmembrane</keyword>
<keyword id="KW-1133">Transmembrane helix</keyword>
<gene>
    <name evidence="9" type="primary">Nat8f5</name>
    <name evidence="9" type="synonym">Cml5</name>
</gene>